<gene>
    <name evidence="2" type="primary">e(y)2</name>
    <name type="ORF">GL26889</name>
</gene>
<name>ENY2_DROPE</name>
<keyword id="KW-0010">Activator</keyword>
<keyword id="KW-0156">Chromatin regulator</keyword>
<keyword id="KW-0963">Cytoplasm</keyword>
<keyword id="KW-0509">mRNA transport</keyword>
<keyword id="KW-0539">Nucleus</keyword>
<keyword id="KW-0653">Protein transport</keyword>
<keyword id="KW-1185">Reference proteome</keyword>
<keyword id="KW-0804">Transcription</keyword>
<keyword id="KW-0805">Transcription regulation</keyword>
<keyword id="KW-0811">Translocation</keyword>
<keyword id="KW-0813">Transport</keyword>
<dbReference type="EMBL" id="CH479204">
    <property type="protein sequence ID" value="EDW30637.1"/>
    <property type="molecule type" value="Genomic_DNA"/>
</dbReference>
<dbReference type="SMR" id="B4H2S0"/>
<dbReference type="STRING" id="7234.B4H2S0"/>
<dbReference type="EnsemblMetazoa" id="FBtr0192504">
    <property type="protein sequence ID" value="FBpp0190996"/>
    <property type="gene ID" value="FBgn0164470"/>
</dbReference>
<dbReference type="EnsemblMetazoa" id="XM_002025113.2">
    <property type="protein sequence ID" value="XP_002025149.1"/>
    <property type="gene ID" value="LOC6599991"/>
</dbReference>
<dbReference type="GeneID" id="6599991"/>
<dbReference type="KEGG" id="dpe:6599991"/>
<dbReference type="CTD" id="45848"/>
<dbReference type="eggNOG" id="KOG4479">
    <property type="taxonomic scope" value="Eukaryota"/>
</dbReference>
<dbReference type="HOGENOM" id="CLU_134052_1_2_1"/>
<dbReference type="OMA" id="RLMCRNI"/>
<dbReference type="OrthoDB" id="6221744at2759"/>
<dbReference type="PhylomeDB" id="B4H2S0"/>
<dbReference type="Proteomes" id="UP000008744">
    <property type="component" value="Unassembled WGS sequence"/>
</dbReference>
<dbReference type="GO" id="GO:0005737">
    <property type="term" value="C:cytoplasm"/>
    <property type="evidence" value="ECO:0007669"/>
    <property type="project" value="UniProtKB-SubCell"/>
</dbReference>
<dbReference type="GO" id="GO:0071819">
    <property type="term" value="C:DUBm complex"/>
    <property type="evidence" value="ECO:0007669"/>
    <property type="project" value="UniProtKB-UniRule"/>
</dbReference>
<dbReference type="GO" id="GO:0034399">
    <property type="term" value="C:nuclear periphery"/>
    <property type="evidence" value="ECO:0007669"/>
    <property type="project" value="EnsemblMetazoa"/>
</dbReference>
<dbReference type="GO" id="GO:0005643">
    <property type="term" value="C:nuclear pore"/>
    <property type="evidence" value="ECO:0000250"/>
    <property type="project" value="UniProtKB"/>
</dbReference>
<dbReference type="GO" id="GO:0005654">
    <property type="term" value="C:nucleoplasm"/>
    <property type="evidence" value="ECO:0007669"/>
    <property type="project" value="UniProtKB-SubCell"/>
</dbReference>
<dbReference type="GO" id="GO:0000124">
    <property type="term" value="C:SAGA complex"/>
    <property type="evidence" value="ECO:0000250"/>
    <property type="project" value="UniProtKB"/>
</dbReference>
<dbReference type="GO" id="GO:0070390">
    <property type="term" value="C:transcription export complex 2"/>
    <property type="evidence" value="ECO:0007669"/>
    <property type="project" value="UniProtKB-UniRule"/>
</dbReference>
<dbReference type="GO" id="GO:0070742">
    <property type="term" value="F:C2H2 zinc finger domain binding"/>
    <property type="evidence" value="ECO:0007669"/>
    <property type="project" value="EnsemblMetazoa"/>
</dbReference>
<dbReference type="GO" id="GO:0043035">
    <property type="term" value="F:chromatin insulator sequence binding"/>
    <property type="evidence" value="ECO:0000250"/>
    <property type="project" value="UniProtKB"/>
</dbReference>
<dbReference type="GO" id="GO:0001094">
    <property type="term" value="F:TFIID-class transcription factor complex binding"/>
    <property type="evidence" value="ECO:0007669"/>
    <property type="project" value="EnsemblMetazoa"/>
</dbReference>
<dbReference type="GO" id="GO:0003713">
    <property type="term" value="F:transcription coactivator activity"/>
    <property type="evidence" value="ECO:0007669"/>
    <property type="project" value="UniProtKB-UniRule"/>
</dbReference>
<dbReference type="GO" id="GO:0033696">
    <property type="term" value="P:heterochromatin boundary formation"/>
    <property type="evidence" value="ECO:0007669"/>
    <property type="project" value="EnsemblMetazoa"/>
</dbReference>
<dbReference type="GO" id="GO:0006406">
    <property type="term" value="P:mRNA export from nucleus"/>
    <property type="evidence" value="ECO:0000250"/>
    <property type="project" value="UniProtKB"/>
</dbReference>
<dbReference type="GO" id="GO:0016973">
    <property type="term" value="P:poly(A)+ mRNA export from nucleus"/>
    <property type="evidence" value="ECO:0007669"/>
    <property type="project" value="EnsemblMetazoa"/>
</dbReference>
<dbReference type="GO" id="GO:0045944">
    <property type="term" value="P:positive regulation of transcription by RNA polymerase II"/>
    <property type="evidence" value="ECO:0000250"/>
    <property type="project" value="UniProtKB"/>
</dbReference>
<dbReference type="GO" id="GO:0015031">
    <property type="term" value="P:protein transport"/>
    <property type="evidence" value="ECO:0007669"/>
    <property type="project" value="UniProtKB-KW"/>
</dbReference>
<dbReference type="GO" id="GO:0006368">
    <property type="term" value="P:transcription elongation by RNA polymerase II"/>
    <property type="evidence" value="ECO:0007669"/>
    <property type="project" value="UniProtKB-UniRule"/>
</dbReference>
<dbReference type="FunFam" id="1.10.246.140:FF:000002">
    <property type="entry name" value="Enhancer of yellow 2 transcription factor"/>
    <property type="match status" value="1"/>
</dbReference>
<dbReference type="Gene3D" id="1.10.246.140">
    <property type="match status" value="1"/>
</dbReference>
<dbReference type="HAMAP" id="MF_03046">
    <property type="entry name" value="ENY2_Sus1"/>
    <property type="match status" value="1"/>
</dbReference>
<dbReference type="InterPro" id="IPR018783">
    <property type="entry name" value="TF_ENY2"/>
</dbReference>
<dbReference type="InterPro" id="IPR038212">
    <property type="entry name" value="TF_EnY2_sf"/>
</dbReference>
<dbReference type="PANTHER" id="PTHR12514">
    <property type="entry name" value="ENHANCER OF YELLOW 2 TRANSCRIPTION FACTOR"/>
    <property type="match status" value="1"/>
</dbReference>
<dbReference type="Pfam" id="PF10163">
    <property type="entry name" value="EnY2"/>
    <property type="match status" value="1"/>
</dbReference>
<proteinExistence type="inferred from homology"/>
<comment type="function">
    <text evidence="1">Involved in mRNA export coupled transcription activation by association with both the AMEX and the SAGA complexes. The SAGA complex is a multiprotein complex that activates transcription by remodeling chromatin and mediating histone acetylation and deubiquitination. Within the SAGA complex, participates in a subcomplex that specifically deubiquitinates histone H2B. The SAGA complex is recruited to specific gene promoters by activators, where it is required for transcription. Required for nuclear receptor-mediated transactivation. Involved in transcription elongation by recruiting the THO complex onto nascent mRNA. The AMEX complex functions in docking export-competent ribonucleoprotein particles (mRNPs) to the nuclear entrance of the nuclear pore complex (nuclear basket). AMEX participates in mRNA export and accurate chromatin positioning in the nucleus by tethering genes to the nuclear periphery (By similarity).</text>
</comment>
<comment type="subunit">
    <text evidence="2">Component of the nuclear pore complex (NPC)-associated AMEX complex (anchoring and mRNA export complex), composed of at least e(y)2 and xmas-2. Component of the SAGA transcription coactivator-HAT complexes, at least composed of Ada2b, e(y)2, Pcaf/Gcn5, Taf10 and Nipped-A/Trrap. Within the SAGA complex, e(y)2, Sgf11, and not/nonstop form an additional subcomplex of SAGA called the DUB module (deubiquitination module). Component of the THO complex, composed of at least e(y)2, HPR1, THO2, THOC5, THOC6 and THOC7. Interacts with e(y)1. Interacts with su(Hw) (via zinc fingers). Interacts with xmas-2; required for localization to the nuclear periphery. Interacts with the nuclear pore complex (NPC).</text>
</comment>
<comment type="subcellular location">
    <subcellularLocation>
        <location evidence="2">Nucleus</location>
        <location evidence="2">Nucleoplasm</location>
    </subcellularLocation>
    <subcellularLocation>
        <location evidence="2">Cytoplasm</location>
    </subcellularLocation>
</comment>
<comment type="similarity">
    <text evidence="2">Belongs to the ENY2 family.</text>
</comment>
<evidence type="ECO:0000250" key="1"/>
<evidence type="ECO:0000255" key="2">
    <source>
        <dbReference type="HAMAP-Rule" id="MF_03046"/>
    </source>
</evidence>
<accession>B4H2S0</accession>
<reference key="1">
    <citation type="journal article" date="2007" name="Nature">
        <title>Evolution of genes and genomes on the Drosophila phylogeny.</title>
        <authorList>
            <consortium name="Drosophila 12 genomes consortium"/>
        </authorList>
    </citation>
    <scope>NUCLEOTIDE SEQUENCE [LARGE SCALE GENOMIC DNA]</scope>
    <source>
        <strain>MSH-3 / Tucson 14011-0111.49</strain>
    </source>
</reference>
<organism>
    <name type="scientific">Drosophila persimilis</name>
    <name type="common">Fruit fly</name>
    <dbReference type="NCBI Taxonomy" id="7234"/>
    <lineage>
        <taxon>Eukaryota</taxon>
        <taxon>Metazoa</taxon>
        <taxon>Ecdysozoa</taxon>
        <taxon>Arthropoda</taxon>
        <taxon>Hexapoda</taxon>
        <taxon>Insecta</taxon>
        <taxon>Pterygota</taxon>
        <taxon>Neoptera</taxon>
        <taxon>Endopterygota</taxon>
        <taxon>Diptera</taxon>
        <taxon>Brachycera</taxon>
        <taxon>Muscomorpha</taxon>
        <taxon>Ephydroidea</taxon>
        <taxon>Drosophilidae</taxon>
        <taxon>Drosophila</taxon>
        <taxon>Sophophora</taxon>
    </lineage>
</organism>
<sequence length="100" mass="11417">MTIFNAVDKFTMMSGDRVKIKDLLSSRLTECGWRDEVRLLCRSILQEKGAISSFTVEQLVTEVTPRARSLVPDAVKKELLIKIRTIFDENEDDDIDPEDA</sequence>
<protein>
    <recommendedName>
        <fullName evidence="2">Enhancer of yellow 2 transcription factor</fullName>
    </recommendedName>
</protein>
<feature type="chain" id="PRO_0000367557" description="Enhancer of yellow 2 transcription factor">
    <location>
        <begin position="1"/>
        <end position="100"/>
    </location>
</feature>